<sequence length="204" mass="23654">MQKFTTFTSIAIPLERANIDTDAIIPKQFLKSIKRSGFGVNLFDEWRYLDHGEVGMDNSKRPLNMDFVLNQAKYQGAKILLVRENFGCGSSREHAPWALEDYGFKAIIAPSFADIFYNNCFKNGILPIVQDNNIMDEFFTLSGEIMINLDAQSIHTNSKTYFFEIDIERKRRLINGLDDIGLTLQYTDDIKAFEKDYFNKYNWL</sequence>
<evidence type="ECO:0000255" key="1">
    <source>
        <dbReference type="HAMAP-Rule" id="MF_01031"/>
    </source>
</evidence>
<name>LEUD_RUTMC</name>
<dbReference type="EC" id="4.2.1.33" evidence="1"/>
<dbReference type="EMBL" id="CP000488">
    <property type="protein sequence ID" value="ABL02142.1"/>
    <property type="molecule type" value="Genomic_DNA"/>
</dbReference>
<dbReference type="RefSeq" id="WP_011737767.1">
    <property type="nucleotide sequence ID" value="NC_008610.1"/>
</dbReference>
<dbReference type="SMR" id="A1AW35"/>
<dbReference type="STRING" id="413404.Rmag_0371"/>
<dbReference type="KEGG" id="rma:Rmag_0371"/>
<dbReference type="eggNOG" id="COG0066">
    <property type="taxonomic scope" value="Bacteria"/>
</dbReference>
<dbReference type="HOGENOM" id="CLU_081378_0_3_6"/>
<dbReference type="OrthoDB" id="9777465at2"/>
<dbReference type="UniPathway" id="UPA00048">
    <property type="reaction ID" value="UER00071"/>
</dbReference>
<dbReference type="Proteomes" id="UP000002587">
    <property type="component" value="Chromosome"/>
</dbReference>
<dbReference type="GO" id="GO:0009316">
    <property type="term" value="C:3-isopropylmalate dehydratase complex"/>
    <property type="evidence" value="ECO:0007669"/>
    <property type="project" value="InterPro"/>
</dbReference>
<dbReference type="GO" id="GO:0003861">
    <property type="term" value="F:3-isopropylmalate dehydratase activity"/>
    <property type="evidence" value="ECO:0007669"/>
    <property type="project" value="UniProtKB-UniRule"/>
</dbReference>
<dbReference type="GO" id="GO:0009098">
    <property type="term" value="P:L-leucine biosynthetic process"/>
    <property type="evidence" value="ECO:0007669"/>
    <property type="project" value="UniProtKB-UniRule"/>
</dbReference>
<dbReference type="CDD" id="cd01577">
    <property type="entry name" value="IPMI_Swivel"/>
    <property type="match status" value="1"/>
</dbReference>
<dbReference type="FunFam" id="3.20.19.10:FF:000003">
    <property type="entry name" value="3-isopropylmalate dehydratase small subunit"/>
    <property type="match status" value="1"/>
</dbReference>
<dbReference type="Gene3D" id="3.20.19.10">
    <property type="entry name" value="Aconitase, domain 4"/>
    <property type="match status" value="1"/>
</dbReference>
<dbReference type="HAMAP" id="MF_01031">
    <property type="entry name" value="LeuD_type1"/>
    <property type="match status" value="1"/>
</dbReference>
<dbReference type="InterPro" id="IPR004431">
    <property type="entry name" value="3-IsopropMal_deHydase_ssu"/>
</dbReference>
<dbReference type="InterPro" id="IPR015928">
    <property type="entry name" value="Aconitase/3IPM_dehydase_swvl"/>
</dbReference>
<dbReference type="InterPro" id="IPR000573">
    <property type="entry name" value="AconitaseA/IPMdHydase_ssu_swvl"/>
</dbReference>
<dbReference type="InterPro" id="IPR033940">
    <property type="entry name" value="IPMI_Swivel"/>
</dbReference>
<dbReference type="InterPro" id="IPR050075">
    <property type="entry name" value="LeuD"/>
</dbReference>
<dbReference type="NCBIfam" id="TIGR00171">
    <property type="entry name" value="leuD"/>
    <property type="match status" value="1"/>
</dbReference>
<dbReference type="NCBIfam" id="NF002458">
    <property type="entry name" value="PRK01641.1"/>
    <property type="match status" value="1"/>
</dbReference>
<dbReference type="PANTHER" id="PTHR43345:SF5">
    <property type="entry name" value="3-ISOPROPYLMALATE DEHYDRATASE SMALL SUBUNIT"/>
    <property type="match status" value="1"/>
</dbReference>
<dbReference type="PANTHER" id="PTHR43345">
    <property type="entry name" value="3-ISOPROPYLMALATE DEHYDRATASE SMALL SUBUNIT 2-RELATED-RELATED"/>
    <property type="match status" value="1"/>
</dbReference>
<dbReference type="Pfam" id="PF00694">
    <property type="entry name" value="Aconitase_C"/>
    <property type="match status" value="1"/>
</dbReference>
<dbReference type="SUPFAM" id="SSF52016">
    <property type="entry name" value="LeuD/IlvD-like"/>
    <property type="match status" value="1"/>
</dbReference>
<keyword id="KW-0028">Amino-acid biosynthesis</keyword>
<keyword id="KW-0100">Branched-chain amino acid biosynthesis</keyword>
<keyword id="KW-0432">Leucine biosynthesis</keyword>
<keyword id="KW-0456">Lyase</keyword>
<reference key="1">
    <citation type="journal article" date="2007" name="Science">
        <title>The Calyptogena magnifica chemoautotrophic symbiont genome.</title>
        <authorList>
            <person name="Newton I.L.G."/>
            <person name="Woyke T."/>
            <person name="Auchtung T.A."/>
            <person name="Dilly G.F."/>
            <person name="Dutton R.J."/>
            <person name="Fisher M.C."/>
            <person name="Fontanez K.M."/>
            <person name="Lau E."/>
            <person name="Stewart F.J."/>
            <person name="Richardson P.M."/>
            <person name="Barry K.W."/>
            <person name="Saunders E."/>
            <person name="Detter J.C."/>
            <person name="Wu D."/>
            <person name="Eisen J.A."/>
            <person name="Cavanaugh C.M."/>
        </authorList>
    </citation>
    <scope>NUCLEOTIDE SEQUENCE [LARGE SCALE GENOMIC DNA]</scope>
</reference>
<proteinExistence type="inferred from homology"/>
<comment type="function">
    <text evidence="1">Catalyzes the isomerization between 2-isopropylmalate and 3-isopropylmalate, via the formation of 2-isopropylmaleate.</text>
</comment>
<comment type="catalytic activity">
    <reaction evidence="1">
        <text>(2R,3S)-3-isopropylmalate = (2S)-2-isopropylmalate</text>
        <dbReference type="Rhea" id="RHEA:32287"/>
        <dbReference type="ChEBI" id="CHEBI:1178"/>
        <dbReference type="ChEBI" id="CHEBI:35121"/>
        <dbReference type="EC" id="4.2.1.33"/>
    </reaction>
</comment>
<comment type="pathway">
    <text evidence="1">Amino-acid biosynthesis; L-leucine biosynthesis; L-leucine from 3-methyl-2-oxobutanoate: step 2/4.</text>
</comment>
<comment type="subunit">
    <text evidence="1">Heterodimer of LeuC and LeuD.</text>
</comment>
<comment type="similarity">
    <text evidence="1">Belongs to the LeuD family. LeuD type 1 subfamily.</text>
</comment>
<feature type="chain" id="PRO_1000063826" description="3-isopropylmalate dehydratase small subunit">
    <location>
        <begin position="1"/>
        <end position="204"/>
    </location>
</feature>
<protein>
    <recommendedName>
        <fullName evidence="1">3-isopropylmalate dehydratase small subunit</fullName>
        <ecNumber evidence="1">4.2.1.33</ecNumber>
    </recommendedName>
    <alternativeName>
        <fullName evidence="1">Alpha-IPM isomerase</fullName>
        <shortName evidence="1">IPMI</shortName>
    </alternativeName>
    <alternativeName>
        <fullName evidence="1">Isopropylmalate isomerase</fullName>
    </alternativeName>
</protein>
<organism>
    <name type="scientific">Ruthia magnifica subsp. Calyptogena magnifica</name>
    <dbReference type="NCBI Taxonomy" id="413404"/>
    <lineage>
        <taxon>Bacteria</taxon>
        <taxon>Pseudomonadati</taxon>
        <taxon>Pseudomonadota</taxon>
        <taxon>Gammaproteobacteria</taxon>
        <taxon>Candidatus Pseudothioglobaceae</taxon>
        <taxon>Candidatus Ruthturnera</taxon>
    </lineage>
</organism>
<gene>
    <name evidence="1" type="primary">leuD</name>
    <name type="ordered locus">Rmag_0371</name>
</gene>
<accession>A1AW35</accession>